<reference key="1">
    <citation type="submission" date="2008-02" db="EMBL/GenBank/DDBJ databases">
        <title>Complete sequence of Synechococcus sp. PCC 7002.</title>
        <authorList>
            <person name="Li T."/>
            <person name="Zhao J."/>
            <person name="Zhao C."/>
            <person name="Liu Z."/>
            <person name="Zhao F."/>
            <person name="Marquardt J."/>
            <person name="Nomura C.T."/>
            <person name="Persson S."/>
            <person name="Detter J.C."/>
            <person name="Richardson P.M."/>
            <person name="Lanz C."/>
            <person name="Schuster S.C."/>
            <person name="Wang J."/>
            <person name="Li S."/>
            <person name="Huang X."/>
            <person name="Cai T."/>
            <person name="Yu Z."/>
            <person name="Luo J."/>
            <person name="Zhao J."/>
            <person name="Bryant D.A."/>
        </authorList>
    </citation>
    <scope>NUCLEOTIDE SEQUENCE [LARGE SCALE GENOMIC DNA]</scope>
    <source>
        <strain>ATCC 27264 / PCC 7002 / PR-6</strain>
    </source>
</reference>
<feature type="chain" id="PRO_1000145070" description="Protein translocase subunit SecA">
    <location>
        <begin position="1"/>
        <end position="938"/>
    </location>
</feature>
<feature type="binding site" evidence="1">
    <location>
        <position position="90"/>
    </location>
    <ligand>
        <name>ATP</name>
        <dbReference type="ChEBI" id="CHEBI:30616"/>
    </ligand>
</feature>
<feature type="binding site" evidence="1">
    <location>
        <begin position="108"/>
        <end position="112"/>
    </location>
    <ligand>
        <name>ATP</name>
        <dbReference type="ChEBI" id="CHEBI:30616"/>
    </ligand>
</feature>
<feature type="binding site" evidence="1">
    <location>
        <position position="504"/>
    </location>
    <ligand>
        <name>ATP</name>
        <dbReference type="ChEBI" id="CHEBI:30616"/>
    </ligand>
</feature>
<sequence length="938" mass="107054">MFKKLFGDPNARKLKRFQPLVAEINLLAEDFANLTDEALAQKTVEFRAKLDKANSDEETEEILDEILPEAFAVVREAAWRVLQMRHYDVQLLGGIVLHKGQIAEMRTGEGKTLVATLPAYLNGLTGKGVHVVTVNDYLARRDAEWMGQVHRFLGLTVGLIQSSMGPAEKIENYRCDITYTTNSELGFDYLRDNMATTIQEVVQRPFNYCIIDEVDSILVDEARTPLIISGQIERPTEKYLQAAEIAKQLVPQVEEDGPGDYEVDEKARNVLMTDEGFAKAEQLLGVTDLYDEQNPWAHYIFNAVKAKELFKKDVNYIVRGDEVVIVDEFTGRIMPGRRWSDGLHQAIEAQEGVTIQKETQTLANITYQNFFLLYPKLSGMTGTAKTEETEFEKVYNLEVTIIPTNRPTKRQDLADVVYKNEKAKWRAVAEECAQMHETGRPVLVGTTSVEKSEIISAYLHELGIPHNLLNARPENVEKESEIVAQAGRKGAVTIATNMAGRGTDIILGGNSEYMARLKMREYFMPQIVKPEDEGNFAIAGSGKNSGGQGFDTNNKQKKKTWKTTLDIYPTELPTDLEQQLKEAVKFAVDQYGNQSLTELEAEEKLAIASENAPTADPVVQKLRTVYHAIEKTYHDLTSVEHDEVIQNGGLHVIGTERHESRRIDNQLRGRAGRQGDPGSTRFFLSLEDNLLRIFGGDRVAGLMNAFRVEEDMPIESKMLTNSLEGAQKKVETFYYDARKQVFEYDEVMNNQRRAIYAERRRVLEGQDLKEQVIQYAEKTMSEIVEAYVNPELPPEEWKLDKLLDKAKEFIYLLEDLEPKDIEDMTVPEIKTFLHEEVRKAYDLKEAQVEKSQPGLMRQAERFFILQQIDTLWREHLQAIDALRESVGLRGYGQKDPLIEYKQEGYEMFLEMMIDIRRNVVYSLFQFQPQRQPQQPQAV</sequence>
<accession>B1XL02</accession>
<comment type="function">
    <text evidence="1">Part of the Sec protein translocase complex. Interacts with the SecYEG preprotein conducting channel. Has a central role in coupling the hydrolysis of ATP to the transfer of proteins into and across the cell membrane, serving as an ATP-driven molecular motor driving the stepwise translocation of polypeptide chains across the membrane.</text>
</comment>
<comment type="function">
    <text evidence="1">Probably participates in protein translocation into and across both the cytoplasmic and thylakoid membranes in cyanobacterial cells.</text>
</comment>
<comment type="catalytic activity">
    <reaction evidence="1">
        <text>ATP + H2O + cellular proteinSide 1 = ADP + phosphate + cellular proteinSide 2.</text>
        <dbReference type="EC" id="7.4.2.8"/>
    </reaction>
</comment>
<comment type="subunit">
    <text evidence="1">Monomer and homodimer. Part of the essential Sec protein translocation apparatus which comprises SecA, SecYEG and auxiliary proteins SecDF. Other proteins may also be involved.</text>
</comment>
<comment type="subcellular location">
    <subcellularLocation>
        <location evidence="1">Cell inner membrane</location>
        <topology evidence="1">Peripheral membrane protein</topology>
        <orientation evidence="1">Cytoplasmic side</orientation>
    </subcellularLocation>
    <subcellularLocation>
        <location evidence="1">Cellular thylakoid membrane</location>
        <topology evidence="1">Peripheral membrane protein</topology>
        <orientation evidence="1">Cytoplasmic side</orientation>
    </subcellularLocation>
    <subcellularLocation>
        <location evidence="1">Cytoplasm</location>
    </subcellularLocation>
</comment>
<comment type="similarity">
    <text evidence="1">Belongs to the SecA family.</text>
</comment>
<gene>
    <name evidence="1" type="primary">secA</name>
    <name type="ordered locus">SYNPCC7002_A1259</name>
</gene>
<dbReference type="EC" id="7.4.2.8" evidence="1"/>
<dbReference type="EMBL" id="CP000951">
    <property type="protein sequence ID" value="ACA99257.1"/>
    <property type="molecule type" value="Genomic_DNA"/>
</dbReference>
<dbReference type="RefSeq" id="WP_012306880.1">
    <property type="nucleotide sequence ID" value="NZ_JAHHPU010000001.1"/>
</dbReference>
<dbReference type="SMR" id="B1XL02"/>
<dbReference type="STRING" id="32049.SYNPCC7002_A1259"/>
<dbReference type="KEGG" id="syp:SYNPCC7002_A1259"/>
<dbReference type="eggNOG" id="COG0653">
    <property type="taxonomic scope" value="Bacteria"/>
</dbReference>
<dbReference type="HOGENOM" id="CLU_005314_3_0_3"/>
<dbReference type="Proteomes" id="UP000001688">
    <property type="component" value="Chromosome"/>
</dbReference>
<dbReference type="GO" id="GO:0031522">
    <property type="term" value="C:cell envelope Sec protein transport complex"/>
    <property type="evidence" value="ECO:0007669"/>
    <property type="project" value="TreeGrafter"/>
</dbReference>
<dbReference type="GO" id="GO:0005829">
    <property type="term" value="C:cytosol"/>
    <property type="evidence" value="ECO:0007669"/>
    <property type="project" value="TreeGrafter"/>
</dbReference>
<dbReference type="GO" id="GO:0031676">
    <property type="term" value="C:plasma membrane-derived thylakoid membrane"/>
    <property type="evidence" value="ECO:0007669"/>
    <property type="project" value="UniProtKB-SubCell"/>
</dbReference>
<dbReference type="GO" id="GO:0005524">
    <property type="term" value="F:ATP binding"/>
    <property type="evidence" value="ECO:0007669"/>
    <property type="project" value="UniProtKB-UniRule"/>
</dbReference>
<dbReference type="GO" id="GO:0008564">
    <property type="term" value="F:protein-exporting ATPase activity"/>
    <property type="evidence" value="ECO:0007669"/>
    <property type="project" value="UniProtKB-EC"/>
</dbReference>
<dbReference type="GO" id="GO:0065002">
    <property type="term" value="P:intracellular protein transmembrane transport"/>
    <property type="evidence" value="ECO:0007669"/>
    <property type="project" value="UniProtKB-UniRule"/>
</dbReference>
<dbReference type="GO" id="GO:0017038">
    <property type="term" value="P:protein import"/>
    <property type="evidence" value="ECO:0007669"/>
    <property type="project" value="InterPro"/>
</dbReference>
<dbReference type="GO" id="GO:0006605">
    <property type="term" value="P:protein targeting"/>
    <property type="evidence" value="ECO:0007669"/>
    <property type="project" value="UniProtKB-UniRule"/>
</dbReference>
<dbReference type="GO" id="GO:0043952">
    <property type="term" value="P:protein transport by the Sec complex"/>
    <property type="evidence" value="ECO:0007669"/>
    <property type="project" value="TreeGrafter"/>
</dbReference>
<dbReference type="CDD" id="cd17928">
    <property type="entry name" value="DEXDc_SecA"/>
    <property type="match status" value="1"/>
</dbReference>
<dbReference type="CDD" id="cd18803">
    <property type="entry name" value="SF2_C_secA"/>
    <property type="match status" value="1"/>
</dbReference>
<dbReference type="FunFam" id="3.90.1440.10:FF:000003">
    <property type="entry name" value="Preprotein translocase SecA subunit"/>
    <property type="match status" value="1"/>
</dbReference>
<dbReference type="FunFam" id="3.40.50.300:FF:000429">
    <property type="entry name" value="Preprotein translocase subunit SecA"/>
    <property type="match status" value="1"/>
</dbReference>
<dbReference type="FunFam" id="1.10.3060.10:FF:000003">
    <property type="entry name" value="Protein translocase subunit SecA"/>
    <property type="match status" value="1"/>
</dbReference>
<dbReference type="FunFam" id="3.40.50.300:FF:000334">
    <property type="entry name" value="Protein translocase subunit SecA"/>
    <property type="match status" value="1"/>
</dbReference>
<dbReference type="Gene3D" id="1.10.3060.10">
    <property type="entry name" value="Helical scaffold and wing domains of SecA"/>
    <property type="match status" value="1"/>
</dbReference>
<dbReference type="Gene3D" id="3.40.50.300">
    <property type="entry name" value="P-loop containing nucleotide triphosphate hydrolases"/>
    <property type="match status" value="2"/>
</dbReference>
<dbReference type="Gene3D" id="3.90.1440.10">
    <property type="entry name" value="SecA, preprotein cross-linking domain"/>
    <property type="match status" value="1"/>
</dbReference>
<dbReference type="HAMAP" id="MF_01382">
    <property type="entry name" value="SecA"/>
    <property type="match status" value="1"/>
</dbReference>
<dbReference type="InterPro" id="IPR014001">
    <property type="entry name" value="Helicase_ATP-bd"/>
</dbReference>
<dbReference type="InterPro" id="IPR027417">
    <property type="entry name" value="P-loop_NTPase"/>
</dbReference>
<dbReference type="InterPro" id="IPR000185">
    <property type="entry name" value="SecA"/>
</dbReference>
<dbReference type="InterPro" id="IPR020937">
    <property type="entry name" value="SecA_CS"/>
</dbReference>
<dbReference type="InterPro" id="IPR011115">
    <property type="entry name" value="SecA_DEAD"/>
</dbReference>
<dbReference type="InterPro" id="IPR014018">
    <property type="entry name" value="SecA_motor_DEAD"/>
</dbReference>
<dbReference type="InterPro" id="IPR011130">
    <property type="entry name" value="SecA_preprotein_X-link_dom"/>
</dbReference>
<dbReference type="InterPro" id="IPR044722">
    <property type="entry name" value="SecA_SF2_C"/>
</dbReference>
<dbReference type="InterPro" id="IPR011116">
    <property type="entry name" value="SecA_Wing/Scaffold"/>
</dbReference>
<dbReference type="InterPro" id="IPR036266">
    <property type="entry name" value="SecA_Wing/Scaffold_sf"/>
</dbReference>
<dbReference type="InterPro" id="IPR036670">
    <property type="entry name" value="SecA_X-link_sf"/>
</dbReference>
<dbReference type="NCBIfam" id="TIGR00963">
    <property type="entry name" value="secA"/>
    <property type="match status" value="1"/>
</dbReference>
<dbReference type="PANTHER" id="PTHR30612:SF0">
    <property type="entry name" value="CHLOROPLAST PROTEIN-TRANSPORTING ATPASE"/>
    <property type="match status" value="1"/>
</dbReference>
<dbReference type="PANTHER" id="PTHR30612">
    <property type="entry name" value="SECA INNER MEMBRANE COMPONENT OF SEC PROTEIN SECRETION SYSTEM"/>
    <property type="match status" value="1"/>
</dbReference>
<dbReference type="Pfam" id="PF21090">
    <property type="entry name" value="P-loop_SecA"/>
    <property type="match status" value="1"/>
</dbReference>
<dbReference type="Pfam" id="PF07517">
    <property type="entry name" value="SecA_DEAD"/>
    <property type="match status" value="1"/>
</dbReference>
<dbReference type="Pfam" id="PF01043">
    <property type="entry name" value="SecA_PP_bind"/>
    <property type="match status" value="1"/>
</dbReference>
<dbReference type="Pfam" id="PF07516">
    <property type="entry name" value="SecA_SW"/>
    <property type="match status" value="1"/>
</dbReference>
<dbReference type="PRINTS" id="PR00906">
    <property type="entry name" value="SECA"/>
</dbReference>
<dbReference type="SMART" id="SM00957">
    <property type="entry name" value="SecA_DEAD"/>
    <property type="match status" value="1"/>
</dbReference>
<dbReference type="SMART" id="SM00958">
    <property type="entry name" value="SecA_PP_bind"/>
    <property type="match status" value="1"/>
</dbReference>
<dbReference type="SUPFAM" id="SSF81886">
    <property type="entry name" value="Helical scaffold and wing domains of SecA"/>
    <property type="match status" value="1"/>
</dbReference>
<dbReference type="SUPFAM" id="SSF52540">
    <property type="entry name" value="P-loop containing nucleoside triphosphate hydrolases"/>
    <property type="match status" value="2"/>
</dbReference>
<dbReference type="SUPFAM" id="SSF81767">
    <property type="entry name" value="Pre-protein crosslinking domain of SecA"/>
    <property type="match status" value="1"/>
</dbReference>
<dbReference type="PROSITE" id="PS01312">
    <property type="entry name" value="SECA"/>
    <property type="match status" value="1"/>
</dbReference>
<dbReference type="PROSITE" id="PS51196">
    <property type="entry name" value="SECA_MOTOR_DEAD"/>
    <property type="match status" value="1"/>
</dbReference>
<name>SECA_PICP2</name>
<keyword id="KW-0067">ATP-binding</keyword>
<keyword id="KW-0997">Cell inner membrane</keyword>
<keyword id="KW-1003">Cell membrane</keyword>
<keyword id="KW-0963">Cytoplasm</keyword>
<keyword id="KW-0472">Membrane</keyword>
<keyword id="KW-0547">Nucleotide-binding</keyword>
<keyword id="KW-0653">Protein transport</keyword>
<keyword id="KW-1185">Reference proteome</keyword>
<keyword id="KW-0793">Thylakoid</keyword>
<keyword id="KW-1278">Translocase</keyword>
<keyword id="KW-0811">Translocation</keyword>
<keyword id="KW-0813">Transport</keyword>
<evidence type="ECO:0000255" key="1">
    <source>
        <dbReference type="HAMAP-Rule" id="MF_01382"/>
    </source>
</evidence>
<organism>
    <name type="scientific">Picosynechococcus sp. (strain ATCC 27264 / PCC 7002 / PR-6)</name>
    <name type="common">Agmenellum quadruplicatum</name>
    <dbReference type="NCBI Taxonomy" id="32049"/>
    <lineage>
        <taxon>Bacteria</taxon>
        <taxon>Bacillati</taxon>
        <taxon>Cyanobacteriota</taxon>
        <taxon>Cyanophyceae</taxon>
        <taxon>Oscillatoriophycideae</taxon>
        <taxon>Chroococcales</taxon>
        <taxon>Geminocystaceae</taxon>
        <taxon>Picosynechococcus</taxon>
    </lineage>
</organism>
<protein>
    <recommendedName>
        <fullName evidence="1">Protein translocase subunit SecA</fullName>
        <ecNumber evidence="1">7.4.2.8</ecNumber>
    </recommendedName>
</protein>
<proteinExistence type="inferred from homology"/>